<comment type="function">
    <text evidence="1">Could be involved in insertion of integral membrane proteins into the membrane.</text>
</comment>
<comment type="subcellular location">
    <subcellularLocation>
        <location evidence="1">Cell inner membrane</location>
        <topology evidence="1">Peripheral membrane protein</topology>
        <orientation evidence="1">Cytoplasmic side</orientation>
    </subcellularLocation>
</comment>
<comment type="similarity">
    <text evidence="1">Belongs to the UPF0161 family.</text>
</comment>
<dbReference type="EMBL" id="CP000916">
    <property type="protein sequence ID" value="ACM23207.1"/>
    <property type="molecule type" value="Genomic_DNA"/>
</dbReference>
<dbReference type="RefSeq" id="WP_015919523.1">
    <property type="nucleotide sequence ID" value="NC_011978.1"/>
</dbReference>
<dbReference type="STRING" id="309803.CTN_1031"/>
<dbReference type="KEGG" id="tna:CTN_1031"/>
<dbReference type="eggNOG" id="COG0759">
    <property type="taxonomic scope" value="Bacteria"/>
</dbReference>
<dbReference type="HOGENOM" id="CLU_144811_2_2_0"/>
<dbReference type="Proteomes" id="UP000000445">
    <property type="component" value="Chromosome"/>
</dbReference>
<dbReference type="GO" id="GO:0005886">
    <property type="term" value="C:plasma membrane"/>
    <property type="evidence" value="ECO:0007669"/>
    <property type="project" value="UniProtKB-SubCell"/>
</dbReference>
<dbReference type="HAMAP" id="MF_00386">
    <property type="entry name" value="UPF0161_YidD"/>
    <property type="match status" value="1"/>
</dbReference>
<dbReference type="InterPro" id="IPR002696">
    <property type="entry name" value="Membr_insert_effic_factor_YidD"/>
</dbReference>
<dbReference type="NCBIfam" id="TIGR00278">
    <property type="entry name" value="membrane protein insertion efficiency factor YidD"/>
    <property type="match status" value="1"/>
</dbReference>
<dbReference type="PANTHER" id="PTHR33383">
    <property type="entry name" value="MEMBRANE PROTEIN INSERTION EFFICIENCY FACTOR-RELATED"/>
    <property type="match status" value="1"/>
</dbReference>
<dbReference type="PANTHER" id="PTHR33383:SF1">
    <property type="entry name" value="MEMBRANE PROTEIN INSERTION EFFICIENCY FACTOR-RELATED"/>
    <property type="match status" value="1"/>
</dbReference>
<dbReference type="Pfam" id="PF01809">
    <property type="entry name" value="YidD"/>
    <property type="match status" value="1"/>
</dbReference>
<dbReference type="SMART" id="SM01234">
    <property type="entry name" value="Haemolytic"/>
    <property type="match status" value="1"/>
</dbReference>
<accession>B9K8C4</accession>
<keyword id="KW-0997">Cell inner membrane</keyword>
<keyword id="KW-1003">Cell membrane</keyword>
<keyword id="KW-0472">Membrane</keyword>
<name>YIDD_THENN</name>
<organism>
    <name type="scientific">Thermotoga neapolitana (strain ATCC 49049 / DSM 4359 / NBRC 107923 / NS-E)</name>
    <dbReference type="NCBI Taxonomy" id="309803"/>
    <lineage>
        <taxon>Bacteria</taxon>
        <taxon>Thermotogati</taxon>
        <taxon>Thermotogota</taxon>
        <taxon>Thermotogae</taxon>
        <taxon>Thermotogales</taxon>
        <taxon>Thermotogaceae</taxon>
        <taxon>Thermotoga</taxon>
    </lineage>
</organism>
<sequence>MKRLLIMIVRFYQKYISPLKPPTCRFEPTCSNYFIQALEKHGLLKGLFLGLRRVVRCNPLSKGGYDPVPEEFSFKLRRR</sequence>
<feature type="chain" id="PRO_1000197799" description="Putative membrane protein insertion efficiency factor">
    <location>
        <begin position="1"/>
        <end position="79"/>
    </location>
</feature>
<protein>
    <recommendedName>
        <fullName evidence="1">Putative membrane protein insertion efficiency factor</fullName>
    </recommendedName>
</protein>
<reference key="1">
    <citation type="submission" date="2007-11" db="EMBL/GenBank/DDBJ databases">
        <title>The genome sequence of the hyperthermophilic bacterium Thermotoga neapolitana.</title>
        <authorList>
            <person name="Lim S.K."/>
            <person name="Kim J.S."/>
            <person name="Cha S.H."/>
            <person name="Park B.C."/>
            <person name="Lee D.S."/>
            <person name="Tae H.S."/>
            <person name="Kim S.-J."/>
            <person name="Kim J.J."/>
            <person name="Park K.J."/>
            <person name="Lee S.Y."/>
        </authorList>
    </citation>
    <scope>NUCLEOTIDE SEQUENCE [LARGE SCALE GENOMIC DNA]</scope>
    <source>
        <strain>ATCC 49049 / DSM 4359 / NBRC 107923 / NS-E</strain>
    </source>
</reference>
<evidence type="ECO:0000255" key="1">
    <source>
        <dbReference type="HAMAP-Rule" id="MF_00386"/>
    </source>
</evidence>
<proteinExistence type="inferred from homology"/>
<gene>
    <name type="ordered locus">CTN_1031</name>
</gene>